<evidence type="ECO:0000255" key="1">
    <source>
        <dbReference type="PROSITE-ProRule" id="PRU00837"/>
    </source>
</evidence>
<evidence type="ECO:0000256" key="2">
    <source>
        <dbReference type="SAM" id="MobiDB-lite"/>
    </source>
</evidence>
<proteinExistence type="evidence at protein level"/>
<sequence length="171" mass="18310">AASPQKRAASPRKSPKKSPRKSPKKKSPRKRKARSAAHPPVIDMITAAIAAQKERRGSSVAKIQSYIAAKYRCDINALNPHIRRALKNQVKSGALKQVSGVGATGRFRVGAVKRSAASANKLKATREKARARAKAKKAKAAARRKAAAAKRKAAAAKRRAAKKARKAKAKP</sequence>
<name>H1_ECHCR</name>
<organism>
    <name type="scientific">Echinolampas crassa</name>
    <name type="common">Sea urchin</name>
    <name type="synonym">Palaeolampas crassa</name>
    <dbReference type="NCBI Taxonomy" id="7646"/>
    <lineage>
        <taxon>Eukaryota</taxon>
        <taxon>Metazoa</taxon>
        <taxon>Echinodermata</taxon>
        <taxon>Eleutherozoa</taxon>
        <taxon>Echinozoa</taxon>
        <taxon>Echinoidea</taxon>
        <taxon>Euechinoidea</taxon>
        <taxon>Atelostomata</taxon>
        <taxon>Cassiduloida</taxon>
        <taxon>Echinolampadidae</taxon>
        <taxon>Echinolampas</taxon>
    </lineage>
</organism>
<accession>P02257</accession>
<protein>
    <recommendedName>
        <fullName>Histone H1, gonadal</fullName>
    </recommendedName>
</protein>
<dbReference type="PIR" id="A02587">
    <property type="entry name" value="HSUR1E"/>
</dbReference>
<dbReference type="SMR" id="P02257"/>
<dbReference type="GO" id="GO:0000786">
    <property type="term" value="C:nucleosome"/>
    <property type="evidence" value="ECO:0007669"/>
    <property type="project" value="InterPro"/>
</dbReference>
<dbReference type="GO" id="GO:0005634">
    <property type="term" value="C:nucleus"/>
    <property type="evidence" value="ECO:0007669"/>
    <property type="project" value="UniProtKB-SubCell"/>
</dbReference>
<dbReference type="GO" id="GO:0003677">
    <property type="term" value="F:DNA binding"/>
    <property type="evidence" value="ECO:0007669"/>
    <property type="project" value="UniProtKB-KW"/>
</dbReference>
<dbReference type="GO" id="GO:0030527">
    <property type="term" value="F:structural constituent of chromatin"/>
    <property type="evidence" value="ECO:0007669"/>
    <property type="project" value="InterPro"/>
</dbReference>
<dbReference type="GO" id="GO:0006334">
    <property type="term" value="P:nucleosome assembly"/>
    <property type="evidence" value="ECO:0007669"/>
    <property type="project" value="InterPro"/>
</dbReference>
<dbReference type="CDD" id="cd00073">
    <property type="entry name" value="H15"/>
    <property type="match status" value="1"/>
</dbReference>
<dbReference type="FunFam" id="1.10.10.10:FF:000140">
    <property type="entry name" value="Histone H1.0"/>
    <property type="match status" value="1"/>
</dbReference>
<dbReference type="Gene3D" id="1.10.10.10">
    <property type="entry name" value="Winged helix-like DNA-binding domain superfamily/Winged helix DNA-binding domain"/>
    <property type="match status" value="1"/>
</dbReference>
<dbReference type="InterPro" id="IPR005819">
    <property type="entry name" value="H1/H5"/>
</dbReference>
<dbReference type="InterPro" id="IPR005818">
    <property type="entry name" value="Histone_H1/H5_H15"/>
</dbReference>
<dbReference type="InterPro" id="IPR036388">
    <property type="entry name" value="WH-like_DNA-bd_sf"/>
</dbReference>
<dbReference type="InterPro" id="IPR036390">
    <property type="entry name" value="WH_DNA-bd_sf"/>
</dbReference>
<dbReference type="Pfam" id="PF00538">
    <property type="entry name" value="Linker_histone"/>
    <property type="match status" value="1"/>
</dbReference>
<dbReference type="PRINTS" id="PR00624">
    <property type="entry name" value="HISTONEH5"/>
</dbReference>
<dbReference type="SMART" id="SM00526">
    <property type="entry name" value="H15"/>
    <property type="match status" value="1"/>
</dbReference>
<dbReference type="SUPFAM" id="SSF46785">
    <property type="entry name" value="Winged helix' DNA-binding domain"/>
    <property type="match status" value="1"/>
</dbReference>
<dbReference type="PROSITE" id="PS51504">
    <property type="entry name" value="H15"/>
    <property type="match status" value="1"/>
</dbReference>
<comment type="function">
    <text>Histones H1 are necessary for the condensation of nucleosome chains into higher-order structures.</text>
</comment>
<comment type="subcellular location">
    <subcellularLocation>
        <location>Nucleus</location>
    </subcellularLocation>
    <subcellularLocation>
        <location>Chromosome</location>
    </subcellularLocation>
</comment>
<comment type="tissue specificity">
    <text>Sperm.</text>
</comment>
<comment type="similarity">
    <text evidence="1">Belongs to the histone H1/H5 family.</text>
</comment>
<reference key="1">
    <citation type="journal article" date="1982" name="Biochim. Biophys. Acta">
        <title>A comparison of the amino acid sequences of histones H1 from the sperm of Echinolampas crassa and Parechinus angulosus.</title>
        <authorList>
            <person name="Strickland W.N."/>
            <person name="Strickland M."/>
            <person name="von Holt C."/>
        </authorList>
    </citation>
    <scope>PROTEIN SEQUENCE</scope>
</reference>
<keyword id="KW-0158">Chromosome</keyword>
<keyword id="KW-0903">Direct protein sequencing</keyword>
<keyword id="KW-0238">DNA-binding</keyword>
<keyword id="KW-0539">Nucleus</keyword>
<feature type="chain" id="PRO_0000195938" description="Histone H1, gonadal">
    <location>
        <begin position="1"/>
        <end position="171" status="greater than"/>
    </location>
</feature>
<feature type="domain" description="H15" evidence="1">
    <location>
        <begin position="37"/>
        <end position="111"/>
    </location>
</feature>
<feature type="region of interest" description="Disordered" evidence="2">
    <location>
        <begin position="1"/>
        <end position="40"/>
    </location>
</feature>
<feature type="region of interest" description="Disordered" evidence="2">
    <location>
        <begin position="133"/>
        <end position="171"/>
    </location>
</feature>
<feature type="compositionally biased region" description="Basic residues" evidence="2">
    <location>
        <begin position="9"/>
        <end position="35"/>
    </location>
</feature>
<feature type="non-terminal residue">
    <location>
        <position position="171"/>
    </location>
</feature>